<gene>
    <name evidence="1" type="primary">ubiB</name>
    <name type="ordered locus">Bxeno_A0414</name>
    <name type="ORF">Bxe_A4047</name>
</gene>
<sequence length="525" mass="59590">MRFLRFLKIFFTVIRFGLDEMMLSRVNDRRVRLLLRITTIGRKFDAPPGVRLRLALESLGPIFVKFGQVLSTRRDLLPVDIANELAKLQDQVPPFDSAVAIGLVEKSLGAPVDVLFDDFERVPVASASIAQVHFATVKAGQHAGKAVAVKVLRPNMLPVIDSDLALLRDIAVWAERLWADGKRLKPREVVAEFDKYLHDELDLMREAANGSQLRRNFAGLDLLLVPEMYWEFCTPTVLVMERMVGVPISQVETLRAAGVDIPKLAREGVEIFFTQVFRDGFFHADMHPGNIQVSLDPAHFGRYIALDFGIIGALSDFDKNYLAQNFLAFFKRDYHRVATLHLESGWVPPTTRVEELESAIRAVCEPYFDRALKDISLGQVLMRLFSTSRRFNVEIQPQLVLLQKTMLNVEGLGRSLDPELDLWKTAKPYLERWMNEQIGLRGWYERLKIEAPQWSKTLPQLPRLIHHALAERHDHTRGANDEMIRQILLEQKRTNRLLQGLLLFGVAVGVGAALARVFLALAYGG</sequence>
<proteinExistence type="inferred from homology"/>
<organism>
    <name type="scientific">Paraburkholderia xenovorans (strain LB400)</name>
    <dbReference type="NCBI Taxonomy" id="266265"/>
    <lineage>
        <taxon>Bacteria</taxon>
        <taxon>Pseudomonadati</taxon>
        <taxon>Pseudomonadota</taxon>
        <taxon>Betaproteobacteria</taxon>
        <taxon>Burkholderiales</taxon>
        <taxon>Burkholderiaceae</taxon>
        <taxon>Paraburkholderia</taxon>
    </lineage>
</organism>
<reference key="1">
    <citation type="journal article" date="2006" name="Proc. Natl. Acad. Sci. U.S.A.">
        <title>Burkholderia xenovorans LB400 harbors a multi-replicon, 9.73-Mbp genome shaped for versatility.</title>
        <authorList>
            <person name="Chain P.S.G."/>
            <person name="Denef V.J."/>
            <person name="Konstantinidis K.T."/>
            <person name="Vergez L.M."/>
            <person name="Agullo L."/>
            <person name="Reyes V.L."/>
            <person name="Hauser L."/>
            <person name="Cordova M."/>
            <person name="Gomez L."/>
            <person name="Gonzalez M."/>
            <person name="Land M."/>
            <person name="Lao V."/>
            <person name="Larimer F."/>
            <person name="LiPuma J.J."/>
            <person name="Mahenthiralingam E."/>
            <person name="Malfatti S.A."/>
            <person name="Marx C.J."/>
            <person name="Parnell J.J."/>
            <person name="Ramette A."/>
            <person name="Richardson P."/>
            <person name="Seeger M."/>
            <person name="Smith D."/>
            <person name="Spilker T."/>
            <person name="Sul W.J."/>
            <person name="Tsoi T.V."/>
            <person name="Ulrich L.E."/>
            <person name="Zhulin I.B."/>
            <person name="Tiedje J.M."/>
        </authorList>
    </citation>
    <scope>NUCLEOTIDE SEQUENCE [LARGE SCALE GENOMIC DNA]</scope>
    <source>
        <strain>LB400</strain>
    </source>
</reference>
<comment type="function">
    <text evidence="1">Is probably a protein kinase regulator of UbiI activity which is involved in aerobic coenzyme Q (ubiquinone) biosynthesis.</text>
</comment>
<comment type="pathway">
    <text>Cofactor biosynthesis; ubiquinone biosynthesis [regulation].</text>
</comment>
<comment type="subcellular location">
    <subcellularLocation>
        <location evidence="1">Cell inner membrane</location>
        <topology evidence="1">Single-pass membrane protein</topology>
    </subcellularLocation>
</comment>
<comment type="similarity">
    <text evidence="1">Belongs to the ABC1 family. UbiB subfamily.</text>
</comment>
<protein>
    <recommendedName>
        <fullName evidence="1">Probable protein kinase UbiB</fullName>
        <ecNumber evidence="1">2.7.-.-</ecNumber>
    </recommendedName>
    <alternativeName>
        <fullName evidence="1">Ubiquinone biosynthesis protein UbiB</fullName>
    </alternativeName>
</protein>
<accession>Q145N7</accession>
<name>UBIB_PARXL</name>
<dbReference type="EC" id="2.7.-.-" evidence="1"/>
<dbReference type="EMBL" id="CP000270">
    <property type="protein sequence ID" value="ABE28952.1"/>
    <property type="molecule type" value="Genomic_DNA"/>
</dbReference>
<dbReference type="RefSeq" id="WP_011486778.1">
    <property type="nucleotide sequence ID" value="NC_007951.1"/>
</dbReference>
<dbReference type="SMR" id="Q145N7"/>
<dbReference type="STRING" id="266265.Bxe_A4047"/>
<dbReference type="KEGG" id="bxb:DR64_1724"/>
<dbReference type="KEGG" id="bxe:Bxe_A4047"/>
<dbReference type="PATRIC" id="fig|266265.5.peg.437"/>
<dbReference type="eggNOG" id="COG0661">
    <property type="taxonomic scope" value="Bacteria"/>
</dbReference>
<dbReference type="OrthoDB" id="9795390at2"/>
<dbReference type="UniPathway" id="UPA00232"/>
<dbReference type="Proteomes" id="UP000001817">
    <property type="component" value="Chromosome 1"/>
</dbReference>
<dbReference type="GO" id="GO:0005886">
    <property type="term" value="C:plasma membrane"/>
    <property type="evidence" value="ECO:0007669"/>
    <property type="project" value="UniProtKB-SubCell"/>
</dbReference>
<dbReference type="GO" id="GO:0005524">
    <property type="term" value="F:ATP binding"/>
    <property type="evidence" value="ECO:0007669"/>
    <property type="project" value="UniProtKB-KW"/>
</dbReference>
<dbReference type="GO" id="GO:0004672">
    <property type="term" value="F:protein kinase activity"/>
    <property type="evidence" value="ECO:0007669"/>
    <property type="project" value="UniProtKB-UniRule"/>
</dbReference>
<dbReference type="GO" id="GO:0010795">
    <property type="term" value="P:regulation of ubiquinone biosynthetic process"/>
    <property type="evidence" value="ECO:0007669"/>
    <property type="project" value="UniProtKB-UniRule"/>
</dbReference>
<dbReference type="GO" id="GO:0006744">
    <property type="term" value="P:ubiquinone biosynthetic process"/>
    <property type="evidence" value="ECO:0007669"/>
    <property type="project" value="UniProtKB-UniPathway"/>
</dbReference>
<dbReference type="CDD" id="cd13972">
    <property type="entry name" value="UbiB"/>
    <property type="match status" value="1"/>
</dbReference>
<dbReference type="HAMAP" id="MF_00414">
    <property type="entry name" value="UbiB"/>
    <property type="match status" value="1"/>
</dbReference>
<dbReference type="InterPro" id="IPR004147">
    <property type="entry name" value="ABC1_dom"/>
</dbReference>
<dbReference type="InterPro" id="IPR011009">
    <property type="entry name" value="Kinase-like_dom_sf"/>
</dbReference>
<dbReference type="InterPro" id="IPR010232">
    <property type="entry name" value="UbiB"/>
</dbReference>
<dbReference type="InterPro" id="IPR045308">
    <property type="entry name" value="UbiB_bact"/>
</dbReference>
<dbReference type="InterPro" id="IPR050154">
    <property type="entry name" value="UbiB_kinase"/>
</dbReference>
<dbReference type="NCBIfam" id="NF003404">
    <property type="entry name" value="PRK04750.1"/>
    <property type="match status" value="1"/>
</dbReference>
<dbReference type="NCBIfam" id="TIGR01982">
    <property type="entry name" value="UbiB"/>
    <property type="match status" value="1"/>
</dbReference>
<dbReference type="PANTHER" id="PTHR10566">
    <property type="entry name" value="CHAPERONE-ACTIVITY OF BC1 COMPLEX CABC1 -RELATED"/>
    <property type="match status" value="1"/>
</dbReference>
<dbReference type="PANTHER" id="PTHR10566:SF113">
    <property type="entry name" value="PROTEIN ACTIVITY OF BC1 COMPLEX KINASE 7, CHLOROPLASTIC"/>
    <property type="match status" value="1"/>
</dbReference>
<dbReference type="Pfam" id="PF03109">
    <property type="entry name" value="ABC1"/>
    <property type="match status" value="1"/>
</dbReference>
<dbReference type="SUPFAM" id="SSF56112">
    <property type="entry name" value="Protein kinase-like (PK-like)"/>
    <property type="match status" value="1"/>
</dbReference>
<feature type="chain" id="PRO_1000123899" description="Probable protein kinase UbiB">
    <location>
        <begin position="1"/>
        <end position="525"/>
    </location>
</feature>
<feature type="transmembrane region" description="Helical" evidence="1">
    <location>
        <begin position="501"/>
        <end position="521"/>
    </location>
</feature>
<feature type="domain" description="Protein kinase" evidence="1">
    <location>
        <begin position="118"/>
        <end position="500"/>
    </location>
</feature>
<feature type="active site" description="Proton acceptor" evidence="1">
    <location>
        <position position="285"/>
    </location>
</feature>
<feature type="binding site" evidence="1">
    <location>
        <begin position="124"/>
        <end position="132"/>
    </location>
    <ligand>
        <name>ATP</name>
        <dbReference type="ChEBI" id="CHEBI:30616"/>
    </ligand>
</feature>
<feature type="binding site" evidence="1">
    <location>
        <position position="150"/>
    </location>
    <ligand>
        <name>ATP</name>
        <dbReference type="ChEBI" id="CHEBI:30616"/>
    </ligand>
</feature>
<keyword id="KW-0067">ATP-binding</keyword>
<keyword id="KW-0997">Cell inner membrane</keyword>
<keyword id="KW-1003">Cell membrane</keyword>
<keyword id="KW-0418">Kinase</keyword>
<keyword id="KW-0472">Membrane</keyword>
<keyword id="KW-0547">Nucleotide-binding</keyword>
<keyword id="KW-1185">Reference proteome</keyword>
<keyword id="KW-0808">Transferase</keyword>
<keyword id="KW-0812">Transmembrane</keyword>
<keyword id="KW-1133">Transmembrane helix</keyword>
<keyword id="KW-0831">Ubiquinone biosynthesis</keyword>
<evidence type="ECO:0000255" key="1">
    <source>
        <dbReference type="HAMAP-Rule" id="MF_00414"/>
    </source>
</evidence>